<gene>
    <name type="primary">xylA1</name>
    <name type="ordered locus">XAC1776</name>
</gene>
<proteinExistence type="inferred from homology"/>
<sequence length="441" mass="48367">MYIGAKEYFPGIGKIGFEGRDSDNPLAFKVYDANKTIGDKTMAEHLRFAVAYWHSFCGNGADPFGPGTRAYPWDVGDTALNRAEAKADAAFEFFTKLGVPYYCFHDIDLSPDADDITEYESNLKHMVGVARQRQADTGIKLLWGTANLFSHPRYMNGASTNPDFNVVARAAVQVKAAIDATVALGGENYVFWGGREGYACLHNTQMKREQDNMARFLTLARDYGRSIGFKGNFLIEPKPMEPMKHQYDFDSATVIGFLRQHGLDQDFKLNIEANHATLSGHSFEHDLQVASDAGLLGSIDANRGNAQNGWDTDQFPTDLYDTVGAMLVVLRQGGLAPGGLNFDAKVRRESSDPQDLFLAHIGGMDAFARGLEVANALLTASPLEQWRAERYASFDSGAGADFAAGKTTLADLAKHAAGNAPQQISGRQEAYENLINQYLTR</sequence>
<evidence type="ECO:0000250" key="1"/>
<evidence type="ECO:0000305" key="2"/>
<feature type="chain" id="PRO_0000195819" description="Xylose isomerase 1">
    <location>
        <begin position="1"/>
        <end position="441"/>
    </location>
</feature>
<feature type="active site" evidence="1">
    <location>
        <position position="105"/>
    </location>
</feature>
<feature type="active site" evidence="1">
    <location>
        <position position="108"/>
    </location>
</feature>
<feature type="binding site" evidence="1">
    <location>
        <position position="236"/>
    </location>
    <ligand>
        <name>Mg(2+)</name>
        <dbReference type="ChEBI" id="CHEBI:18420"/>
        <label>1</label>
    </ligand>
</feature>
<feature type="binding site" evidence="1">
    <location>
        <position position="272"/>
    </location>
    <ligand>
        <name>Mg(2+)</name>
        <dbReference type="ChEBI" id="CHEBI:18420"/>
        <label>1</label>
    </ligand>
</feature>
<feature type="binding site" evidence="1">
    <location>
        <position position="272"/>
    </location>
    <ligand>
        <name>Mg(2+)</name>
        <dbReference type="ChEBI" id="CHEBI:18420"/>
        <label>2</label>
    </ligand>
</feature>
<feature type="binding site" evidence="1">
    <location>
        <position position="275"/>
    </location>
    <ligand>
        <name>Mg(2+)</name>
        <dbReference type="ChEBI" id="CHEBI:18420"/>
        <label>2</label>
    </ligand>
</feature>
<feature type="binding site" evidence="1">
    <location>
        <position position="300"/>
    </location>
    <ligand>
        <name>Mg(2+)</name>
        <dbReference type="ChEBI" id="CHEBI:18420"/>
        <label>1</label>
    </ligand>
</feature>
<feature type="binding site" evidence="1">
    <location>
        <position position="311"/>
    </location>
    <ligand>
        <name>Mg(2+)</name>
        <dbReference type="ChEBI" id="CHEBI:18420"/>
        <label>2</label>
    </ligand>
</feature>
<feature type="binding site" evidence="1">
    <location>
        <position position="313"/>
    </location>
    <ligand>
        <name>Mg(2+)</name>
        <dbReference type="ChEBI" id="CHEBI:18420"/>
        <label>2</label>
    </ligand>
</feature>
<feature type="binding site" evidence="1">
    <location>
        <position position="343"/>
    </location>
    <ligand>
        <name>Mg(2+)</name>
        <dbReference type="ChEBI" id="CHEBI:18420"/>
        <label>1</label>
    </ligand>
</feature>
<reference key="1">
    <citation type="journal article" date="2002" name="Nature">
        <title>Comparison of the genomes of two Xanthomonas pathogens with differing host specificities.</title>
        <authorList>
            <person name="da Silva A.C.R."/>
            <person name="Ferro J.A."/>
            <person name="Reinach F.C."/>
            <person name="Farah C.S."/>
            <person name="Furlan L.R."/>
            <person name="Quaggio R.B."/>
            <person name="Monteiro-Vitorello C.B."/>
            <person name="Van Sluys M.A."/>
            <person name="Almeida N.F. Jr."/>
            <person name="Alves L.M.C."/>
            <person name="do Amaral A.M."/>
            <person name="Bertolini M.C."/>
            <person name="Camargo L.E.A."/>
            <person name="Camarotte G."/>
            <person name="Cannavan F."/>
            <person name="Cardozo J."/>
            <person name="Chambergo F."/>
            <person name="Ciapina L.P."/>
            <person name="Cicarelli R.M.B."/>
            <person name="Coutinho L.L."/>
            <person name="Cursino-Santos J.R."/>
            <person name="El-Dorry H."/>
            <person name="Faria J.B."/>
            <person name="Ferreira A.J.S."/>
            <person name="Ferreira R.C.C."/>
            <person name="Ferro M.I.T."/>
            <person name="Formighieri E.F."/>
            <person name="Franco M.C."/>
            <person name="Greggio C.C."/>
            <person name="Gruber A."/>
            <person name="Katsuyama A.M."/>
            <person name="Kishi L.T."/>
            <person name="Leite R.P."/>
            <person name="Lemos E.G.M."/>
            <person name="Lemos M.V.F."/>
            <person name="Locali E.C."/>
            <person name="Machado M.A."/>
            <person name="Madeira A.M.B.N."/>
            <person name="Martinez-Rossi N.M."/>
            <person name="Martins E.C."/>
            <person name="Meidanis J."/>
            <person name="Menck C.F.M."/>
            <person name="Miyaki C.Y."/>
            <person name="Moon D.H."/>
            <person name="Moreira L.M."/>
            <person name="Novo M.T.M."/>
            <person name="Okura V.K."/>
            <person name="Oliveira M.C."/>
            <person name="Oliveira V.R."/>
            <person name="Pereira H.A."/>
            <person name="Rossi A."/>
            <person name="Sena J.A.D."/>
            <person name="Silva C."/>
            <person name="de Souza R.F."/>
            <person name="Spinola L.A.F."/>
            <person name="Takita M.A."/>
            <person name="Tamura R.E."/>
            <person name="Teixeira E.C."/>
            <person name="Tezza R.I.D."/>
            <person name="Trindade dos Santos M."/>
            <person name="Truffi D."/>
            <person name="Tsai S.M."/>
            <person name="White F.F."/>
            <person name="Setubal J.C."/>
            <person name="Kitajima J.P."/>
        </authorList>
    </citation>
    <scope>NUCLEOTIDE SEQUENCE [LARGE SCALE GENOMIC DNA]</scope>
    <source>
        <strain>306</strain>
    </source>
</reference>
<protein>
    <recommendedName>
        <fullName>Xylose isomerase 1</fullName>
        <ecNumber>5.3.1.5</ecNumber>
    </recommendedName>
</protein>
<keyword id="KW-0119">Carbohydrate metabolism</keyword>
<keyword id="KW-0963">Cytoplasm</keyword>
<keyword id="KW-0413">Isomerase</keyword>
<keyword id="KW-0460">Magnesium</keyword>
<keyword id="KW-0479">Metal-binding</keyword>
<keyword id="KW-0859">Xylose metabolism</keyword>
<name>XYLA1_XANAC</name>
<organism>
    <name type="scientific">Xanthomonas axonopodis pv. citri (strain 306)</name>
    <dbReference type="NCBI Taxonomy" id="190486"/>
    <lineage>
        <taxon>Bacteria</taxon>
        <taxon>Pseudomonadati</taxon>
        <taxon>Pseudomonadota</taxon>
        <taxon>Gammaproteobacteria</taxon>
        <taxon>Lysobacterales</taxon>
        <taxon>Lysobacteraceae</taxon>
        <taxon>Xanthomonas</taxon>
    </lineage>
</organism>
<comment type="catalytic activity">
    <reaction>
        <text>alpha-D-xylose = alpha-D-xylulofuranose</text>
        <dbReference type="Rhea" id="RHEA:22816"/>
        <dbReference type="ChEBI" id="CHEBI:28518"/>
        <dbReference type="ChEBI" id="CHEBI:188998"/>
        <dbReference type="EC" id="5.3.1.5"/>
    </reaction>
</comment>
<comment type="cofactor">
    <cofactor evidence="1">
        <name>Mg(2+)</name>
        <dbReference type="ChEBI" id="CHEBI:18420"/>
    </cofactor>
    <text evidence="1">Binds 2 magnesium ions per subunit.</text>
</comment>
<comment type="subunit">
    <text evidence="1">Homotetramer.</text>
</comment>
<comment type="subcellular location">
    <subcellularLocation>
        <location evidence="1">Cytoplasm</location>
    </subcellularLocation>
</comment>
<comment type="similarity">
    <text evidence="2">Belongs to the xylose isomerase family.</text>
</comment>
<dbReference type="EC" id="5.3.1.5"/>
<dbReference type="EMBL" id="AE008923">
    <property type="protein sequence ID" value="AAM36640.1"/>
    <property type="molecule type" value="Genomic_DNA"/>
</dbReference>
<dbReference type="SMR" id="Q8PLL9"/>
<dbReference type="KEGG" id="xac:XAC1776"/>
<dbReference type="eggNOG" id="COG2115">
    <property type="taxonomic scope" value="Bacteria"/>
</dbReference>
<dbReference type="HOGENOM" id="CLU_037261_1_0_6"/>
<dbReference type="Proteomes" id="UP000000576">
    <property type="component" value="Chromosome"/>
</dbReference>
<dbReference type="GO" id="GO:0005737">
    <property type="term" value="C:cytoplasm"/>
    <property type="evidence" value="ECO:0007669"/>
    <property type="project" value="UniProtKB-SubCell"/>
</dbReference>
<dbReference type="GO" id="GO:0000287">
    <property type="term" value="F:magnesium ion binding"/>
    <property type="evidence" value="ECO:0007669"/>
    <property type="project" value="UniProtKB-UniRule"/>
</dbReference>
<dbReference type="GO" id="GO:0009045">
    <property type="term" value="F:xylose isomerase activity"/>
    <property type="evidence" value="ECO:0007669"/>
    <property type="project" value="UniProtKB-UniRule"/>
</dbReference>
<dbReference type="GO" id="GO:0042732">
    <property type="term" value="P:D-xylose metabolic process"/>
    <property type="evidence" value="ECO:0007669"/>
    <property type="project" value="UniProtKB-UniRule"/>
</dbReference>
<dbReference type="FunFam" id="3.20.20.150:FF:000002">
    <property type="entry name" value="Xylose isomerase"/>
    <property type="match status" value="1"/>
</dbReference>
<dbReference type="Gene3D" id="3.20.20.150">
    <property type="entry name" value="Divalent-metal-dependent TIM barrel enzymes"/>
    <property type="match status" value="1"/>
</dbReference>
<dbReference type="HAMAP" id="MF_00455">
    <property type="entry name" value="Xylose_isom_A"/>
    <property type="match status" value="1"/>
</dbReference>
<dbReference type="InterPro" id="IPR036237">
    <property type="entry name" value="Xyl_isomerase-like_sf"/>
</dbReference>
<dbReference type="InterPro" id="IPR013452">
    <property type="entry name" value="Xylose_isom_bac"/>
</dbReference>
<dbReference type="InterPro" id="IPR001998">
    <property type="entry name" value="Xylose_isomerase"/>
</dbReference>
<dbReference type="NCBIfam" id="NF003998">
    <property type="entry name" value="PRK05474.1"/>
    <property type="match status" value="1"/>
</dbReference>
<dbReference type="NCBIfam" id="NF009115">
    <property type="entry name" value="PRK12465.1"/>
    <property type="match status" value="1"/>
</dbReference>
<dbReference type="NCBIfam" id="TIGR02630">
    <property type="entry name" value="xylose_isom_A"/>
    <property type="match status" value="1"/>
</dbReference>
<dbReference type="PANTHER" id="PTHR48408">
    <property type="match status" value="1"/>
</dbReference>
<dbReference type="PANTHER" id="PTHR48408:SF1">
    <property type="entry name" value="XYLOSE ISOMERASE"/>
    <property type="match status" value="1"/>
</dbReference>
<dbReference type="PRINTS" id="PR00688">
    <property type="entry name" value="XYLOSISMRASE"/>
</dbReference>
<dbReference type="SUPFAM" id="SSF51658">
    <property type="entry name" value="Xylose isomerase-like"/>
    <property type="match status" value="1"/>
</dbReference>
<dbReference type="PROSITE" id="PS51415">
    <property type="entry name" value="XYLOSE_ISOMERASE"/>
    <property type="match status" value="1"/>
</dbReference>
<accession>Q8PLL9</accession>